<organism>
    <name type="scientific">Photorhabdus laumondii subsp. laumondii (strain DSM 15139 / CIP 105565 / TT01)</name>
    <name type="common">Photorhabdus luminescens subsp. laumondii</name>
    <dbReference type="NCBI Taxonomy" id="243265"/>
    <lineage>
        <taxon>Bacteria</taxon>
        <taxon>Pseudomonadati</taxon>
        <taxon>Pseudomonadota</taxon>
        <taxon>Gammaproteobacteria</taxon>
        <taxon>Enterobacterales</taxon>
        <taxon>Morganellaceae</taxon>
        <taxon>Photorhabdus</taxon>
    </lineage>
</organism>
<name>FADB_PHOLL</name>
<reference key="1">
    <citation type="journal article" date="2003" name="Nat. Biotechnol.">
        <title>The genome sequence of the entomopathogenic bacterium Photorhabdus luminescens.</title>
        <authorList>
            <person name="Duchaud E."/>
            <person name="Rusniok C."/>
            <person name="Frangeul L."/>
            <person name="Buchrieser C."/>
            <person name="Givaudan A."/>
            <person name="Taourit S."/>
            <person name="Bocs S."/>
            <person name="Boursaux-Eude C."/>
            <person name="Chandler M."/>
            <person name="Charles J.-F."/>
            <person name="Dassa E."/>
            <person name="Derose R."/>
            <person name="Derzelle S."/>
            <person name="Freyssinet G."/>
            <person name="Gaudriault S."/>
            <person name="Medigue C."/>
            <person name="Lanois A."/>
            <person name="Powell K."/>
            <person name="Siguier P."/>
            <person name="Vincent R."/>
            <person name="Wingate V."/>
            <person name="Zouine M."/>
            <person name="Glaser P."/>
            <person name="Boemare N."/>
            <person name="Danchin A."/>
            <person name="Kunst F."/>
        </authorList>
    </citation>
    <scope>NUCLEOTIDE SEQUENCE [LARGE SCALE GENOMIC DNA]</scope>
    <source>
        <strain>DSM 15139 / CIP 105565 / TT01</strain>
    </source>
</reference>
<feature type="chain" id="PRO_0000109273" description="Fatty acid oxidation complex subunit alpha">
    <location>
        <begin position="1"/>
        <end position="728"/>
    </location>
</feature>
<feature type="region of interest" description="Enoyl-CoA hydratase/isomerase" evidence="1">
    <location>
        <begin position="1"/>
        <end position="189"/>
    </location>
</feature>
<feature type="region of interest" description="3-hydroxyacyl-CoA dehydrogenase" evidence="1">
    <location>
        <begin position="311"/>
        <end position="728"/>
    </location>
</feature>
<feature type="active site" description="For 3-hydroxyacyl-CoA dehydrogenase activity" evidence="1">
    <location>
        <position position="450"/>
    </location>
</feature>
<feature type="binding site" evidence="1">
    <location>
        <position position="296"/>
    </location>
    <ligand>
        <name>substrate</name>
    </ligand>
</feature>
<feature type="binding site" evidence="1">
    <location>
        <position position="324"/>
    </location>
    <ligand>
        <name>NAD(+)</name>
        <dbReference type="ChEBI" id="CHEBI:57540"/>
    </ligand>
</feature>
<feature type="binding site" evidence="1">
    <location>
        <position position="343"/>
    </location>
    <ligand>
        <name>NAD(+)</name>
        <dbReference type="ChEBI" id="CHEBI:57540"/>
    </ligand>
</feature>
<feature type="binding site" evidence="1">
    <location>
        <begin position="400"/>
        <end position="402"/>
    </location>
    <ligand>
        <name>NAD(+)</name>
        <dbReference type="ChEBI" id="CHEBI:57540"/>
    </ligand>
</feature>
<feature type="binding site" evidence="1">
    <location>
        <position position="407"/>
    </location>
    <ligand>
        <name>NAD(+)</name>
        <dbReference type="ChEBI" id="CHEBI:57540"/>
    </ligand>
</feature>
<feature type="binding site" evidence="1">
    <location>
        <position position="429"/>
    </location>
    <ligand>
        <name>NAD(+)</name>
        <dbReference type="ChEBI" id="CHEBI:57540"/>
    </ligand>
</feature>
<feature type="binding site" evidence="1">
    <location>
        <position position="453"/>
    </location>
    <ligand>
        <name>NAD(+)</name>
        <dbReference type="ChEBI" id="CHEBI:57540"/>
    </ligand>
</feature>
<feature type="binding site" evidence="1">
    <location>
        <position position="500"/>
    </location>
    <ligand>
        <name>substrate</name>
    </ligand>
</feature>
<feature type="binding site" evidence="1">
    <location>
        <position position="660"/>
    </location>
    <ligand>
        <name>substrate</name>
    </ligand>
</feature>
<feature type="site" description="Important for catalytic activity" evidence="1">
    <location>
        <position position="119"/>
    </location>
</feature>
<feature type="site" description="Important for catalytic activity" evidence="1">
    <location>
        <position position="139"/>
    </location>
</feature>
<keyword id="KW-0276">Fatty acid metabolism</keyword>
<keyword id="KW-0413">Isomerase</keyword>
<keyword id="KW-0442">Lipid degradation</keyword>
<keyword id="KW-0443">Lipid metabolism</keyword>
<keyword id="KW-0456">Lyase</keyword>
<keyword id="KW-0511">Multifunctional enzyme</keyword>
<keyword id="KW-0520">NAD</keyword>
<keyword id="KW-0560">Oxidoreductase</keyword>
<keyword id="KW-1185">Reference proteome</keyword>
<sequence length="728" mass="79352">MLYQSETIQVSWLKDGIAELVFNAPAAINKLDTKTVASLDKAIASLEQQTGLKGVLLRSEKTAFIVGADITEFLSLFDSPVEKLQEWLNFSNSIFNRIEDLPVPTISAINGYALGGGCECVLSTDFRVASPDIRIGLPETKLGIMPGFGGSVRLPRLIGTDNALDIIAAGKDIGAEEALKNGLIDAVVPKEKLVDSAVSMLEQAIAGNLDWKAARQPKLEPLKLNETERGMSFSVAKGMVMKVAGPHYPAPITAVKSIEKAATFGRDEALKQETASFIPLAQTNVARALVGIFLNDQYVKGLAKKHLKEVTIPEYAAVLGAGIMGGGIAYQSARKGIPVMMKDISQQSLELGMNEAAKLLNKQFERGRLDAIKMARTLSSIQPTLNYAGIEQAQIVVEAVVENPKIKAAVLSETETLVNEDCVLASNTSTIPISELAKSLKRPENFCGMHFFNPVHRMPLVEVIRGEKTSEKTISTVVAYASKMGKTPIVVNDCPGFFVNRVLLPYLLGFGLLLRDGGDFRQIDKIMEKEFGWPMGPAYLIDVIGLDTAHHSQSVMAQGFPDRMHRDYKDAIHVLYDNQRYGQKNGLGFYKYTQDKKGKPKKEQDEQTDQLLATICQQKSNFSGEEIIARTMIPMINEVVRCLEEGVIASPAEADMALVYGLGFPPFHGGVFRYLETMGTAAYVKMAENYAHLGALYQVPPGLKAKAERNESYYSTAATIAVSTGKTA</sequence>
<dbReference type="EC" id="4.2.1.17" evidence="1"/>
<dbReference type="EC" id="5.1.2.3" evidence="1"/>
<dbReference type="EC" id="5.3.3.8" evidence="1"/>
<dbReference type="EC" id="1.1.1.35" evidence="1"/>
<dbReference type="EMBL" id="BX571873">
    <property type="protein sequence ID" value="CAE16774.1"/>
    <property type="molecule type" value="Genomic_DNA"/>
</dbReference>
<dbReference type="RefSeq" id="WP_011148492.1">
    <property type="nucleotide sequence ID" value="NC_005126.1"/>
</dbReference>
<dbReference type="SMR" id="Q7MZ92"/>
<dbReference type="STRING" id="243265.plu4402"/>
<dbReference type="GeneID" id="48850617"/>
<dbReference type="KEGG" id="plu:plu4402"/>
<dbReference type="eggNOG" id="COG1024">
    <property type="taxonomic scope" value="Bacteria"/>
</dbReference>
<dbReference type="eggNOG" id="COG1250">
    <property type="taxonomic scope" value="Bacteria"/>
</dbReference>
<dbReference type="HOGENOM" id="CLU_009834_16_3_6"/>
<dbReference type="OrthoDB" id="5389341at2"/>
<dbReference type="UniPathway" id="UPA00659"/>
<dbReference type="Proteomes" id="UP000002514">
    <property type="component" value="Chromosome"/>
</dbReference>
<dbReference type="GO" id="GO:0036125">
    <property type="term" value="C:fatty acid beta-oxidation multienzyme complex"/>
    <property type="evidence" value="ECO:0007669"/>
    <property type="project" value="InterPro"/>
</dbReference>
<dbReference type="GO" id="GO:0008692">
    <property type="term" value="F:3-hydroxybutyryl-CoA epimerase activity"/>
    <property type="evidence" value="ECO:0007669"/>
    <property type="project" value="UniProtKB-UniRule"/>
</dbReference>
<dbReference type="GO" id="GO:0004165">
    <property type="term" value="F:delta(3)-delta(2)-enoyl-CoA isomerase activity"/>
    <property type="evidence" value="ECO:0007669"/>
    <property type="project" value="UniProtKB-UniRule"/>
</dbReference>
<dbReference type="GO" id="GO:0004300">
    <property type="term" value="F:enoyl-CoA hydratase activity"/>
    <property type="evidence" value="ECO:0007669"/>
    <property type="project" value="UniProtKB-UniRule"/>
</dbReference>
<dbReference type="GO" id="GO:0016509">
    <property type="term" value="F:long-chain-3-hydroxyacyl-CoA dehydrogenase activity"/>
    <property type="evidence" value="ECO:0007669"/>
    <property type="project" value="TreeGrafter"/>
</dbReference>
<dbReference type="GO" id="GO:0070403">
    <property type="term" value="F:NAD+ binding"/>
    <property type="evidence" value="ECO:0007669"/>
    <property type="project" value="InterPro"/>
</dbReference>
<dbReference type="GO" id="GO:0006635">
    <property type="term" value="P:fatty acid beta-oxidation"/>
    <property type="evidence" value="ECO:0007669"/>
    <property type="project" value="UniProtKB-UniRule"/>
</dbReference>
<dbReference type="CDD" id="cd06558">
    <property type="entry name" value="crotonase-like"/>
    <property type="match status" value="1"/>
</dbReference>
<dbReference type="FunFam" id="1.10.1040.50:FF:000001">
    <property type="entry name" value="Fatty acid oxidation complex subunit alpha"/>
    <property type="match status" value="1"/>
</dbReference>
<dbReference type="FunFam" id="3.90.226.10:FF:000018">
    <property type="entry name" value="Fatty acid oxidation complex subunit alpha"/>
    <property type="match status" value="1"/>
</dbReference>
<dbReference type="FunFam" id="3.40.50.720:FF:000009">
    <property type="entry name" value="Fatty oxidation complex, alpha subunit"/>
    <property type="match status" value="1"/>
</dbReference>
<dbReference type="Gene3D" id="1.10.1040.50">
    <property type="match status" value="1"/>
</dbReference>
<dbReference type="Gene3D" id="3.90.226.10">
    <property type="entry name" value="2-enoyl-CoA Hydratase, Chain A, domain 1"/>
    <property type="match status" value="1"/>
</dbReference>
<dbReference type="Gene3D" id="3.40.50.720">
    <property type="entry name" value="NAD(P)-binding Rossmann-like Domain"/>
    <property type="match status" value="1"/>
</dbReference>
<dbReference type="HAMAP" id="MF_01621">
    <property type="entry name" value="FadB"/>
    <property type="match status" value="1"/>
</dbReference>
<dbReference type="InterPro" id="IPR006180">
    <property type="entry name" value="3-OHacyl-CoA_DH_CS"/>
</dbReference>
<dbReference type="InterPro" id="IPR006176">
    <property type="entry name" value="3-OHacyl-CoA_DH_NAD-bd"/>
</dbReference>
<dbReference type="InterPro" id="IPR006108">
    <property type="entry name" value="3HC_DH_C"/>
</dbReference>
<dbReference type="InterPro" id="IPR008927">
    <property type="entry name" value="6-PGluconate_DH-like_C_sf"/>
</dbReference>
<dbReference type="InterPro" id="IPR029045">
    <property type="entry name" value="ClpP/crotonase-like_dom_sf"/>
</dbReference>
<dbReference type="InterPro" id="IPR018376">
    <property type="entry name" value="Enoyl-CoA_hyd/isom_CS"/>
</dbReference>
<dbReference type="InterPro" id="IPR001753">
    <property type="entry name" value="Enoyl-CoA_hydra/iso"/>
</dbReference>
<dbReference type="InterPro" id="IPR050136">
    <property type="entry name" value="FA_oxidation_alpha_subunit"/>
</dbReference>
<dbReference type="InterPro" id="IPR012799">
    <property type="entry name" value="FadB"/>
</dbReference>
<dbReference type="InterPro" id="IPR036291">
    <property type="entry name" value="NAD(P)-bd_dom_sf"/>
</dbReference>
<dbReference type="NCBIfam" id="TIGR02437">
    <property type="entry name" value="FadB"/>
    <property type="match status" value="1"/>
</dbReference>
<dbReference type="NCBIfam" id="NF008727">
    <property type="entry name" value="PRK11730.1"/>
    <property type="match status" value="1"/>
</dbReference>
<dbReference type="PANTHER" id="PTHR43612">
    <property type="entry name" value="TRIFUNCTIONAL ENZYME SUBUNIT ALPHA"/>
    <property type="match status" value="1"/>
</dbReference>
<dbReference type="PANTHER" id="PTHR43612:SF3">
    <property type="entry name" value="TRIFUNCTIONAL ENZYME SUBUNIT ALPHA, MITOCHONDRIAL"/>
    <property type="match status" value="1"/>
</dbReference>
<dbReference type="Pfam" id="PF00725">
    <property type="entry name" value="3HCDH"/>
    <property type="match status" value="2"/>
</dbReference>
<dbReference type="Pfam" id="PF02737">
    <property type="entry name" value="3HCDH_N"/>
    <property type="match status" value="1"/>
</dbReference>
<dbReference type="Pfam" id="PF00378">
    <property type="entry name" value="ECH_1"/>
    <property type="match status" value="1"/>
</dbReference>
<dbReference type="SUPFAM" id="SSF48179">
    <property type="entry name" value="6-phosphogluconate dehydrogenase C-terminal domain-like"/>
    <property type="match status" value="2"/>
</dbReference>
<dbReference type="SUPFAM" id="SSF52096">
    <property type="entry name" value="ClpP/crotonase"/>
    <property type="match status" value="1"/>
</dbReference>
<dbReference type="SUPFAM" id="SSF51735">
    <property type="entry name" value="NAD(P)-binding Rossmann-fold domains"/>
    <property type="match status" value="1"/>
</dbReference>
<dbReference type="PROSITE" id="PS00067">
    <property type="entry name" value="3HCDH"/>
    <property type="match status" value="1"/>
</dbReference>
<dbReference type="PROSITE" id="PS00166">
    <property type="entry name" value="ENOYL_COA_HYDRATASE"/>
    <property type="match status" value="1"/>
</dbReference>
<comment type="function">
    <text evidence="1">Involved in the aerobic and anaerobic degradation of long-chain fatty acids via beta-oxidation cycle. Catalyzes the formation of 3-oxoacyl-CoA from enoyl-CoA via L-3-hydroxyacyl-CoA. It can also use D-3-hydroxyacyl-CoA and cis-3-enoyl-CoA as substrate.</text>
</comment>
<comment type="catalytic activity">
    <reaction evidence="1">
        <text>a (3S)-3-hydroxyacyl-CoA + NAD(+) = a 3-oxoacyl-CoA + NADH + H(+)</text>
        <dbReference type="Rhea" id="RHEA:22432"/>
        <dbReference type="ChEBI" id="CHEBI:15378"/>
        <dbReference type="ChEBI" id="CHEBI:57318"/>
        <dbReference type="ChEBI" id="CHEBI:57540"/>
        <dbReference type="ChEBI" id="CHEBI:57945"/>
        <dbReference type="ChEBI" id="CHEBI:90726"/>
        <dbReference type="EC" id="1.1.1.35"/>
    </reaction>
</comment>
<comment type="catalytic activity">
    <reaction evidence="1">
        <text>a (3S)-3-hydroxyacyl-CoA = a (2E)-enoyl-CoA + H2O</text>
        <dbReference type="Rhea" id="RHEA:16105"/>
        <dbReference type="ChEBI" id="CHEBI:15377"/>
        <dbReference type="ChEBI" id="CHEBI:57318"/>
        <dbReference type="ChEBI" id="CHEBI:58856"/>
        <dbReference type="EC" id="4.2.1.17"/>
    </reaction>
</comment>
<comment type="catalytic activity">
    <reaction evidence="1">
        <text>a 4-saturated-(3S)-3-hydroxyacyl-CoA = a (3E)-enoyl-CoA + H2O</text>
        <dbReference type="Rhea" id="RHEA:20724"/>
        <dbReference type="ChEBI" id="CHEBI:15377"/>
        <dbReference type="ChEBI" id="CHEBI:58521"/>
        <dbReference type="ChEBI" id="CHEBI:137480"/>
        <dbReference type="EC" id="4.2.1.17"/>
    </reaction>
</comment>
<comment type="catalytic activity">
    <reaction evidence="1">
        <text>(3S)-3-hydroxybutanoyl-CoA = (3R)-3-hydroxybutanoyl-CoA</text>
        <dbReference type="Rhea" id="RHEA:21760"/>
        <dbReference type="ChEBI" id="CHEBI:57315"/>
        <dbReference type="ChEBI" id="CHEBI:57316"/>
        <dbReference type="EC" id="5.1.2.3"/>
    </reaction>
</comment>
<comment type="catalytic activity">
    <reaction evidence="1">
        <text>a (3Z)-enoyl-CoA = a 4-saturated (2E)-enoyl-CoA</text>
        <dbReference type="Rhea" id="RHEA:45900"/>
        <dbReference type="ChEBI" id="CHEBI:85097"/>
        <dbReference type="ChEBI" id="CHEBI:85489"/>
        <dbReference type="EC" id="5.3.3.8"/>
    </reaction>
</comment>
<comment type="catalytic activity">
    <reaction evidence="1">
        <text>a (3E)-enoyl-CoA = a 4-saturated (2E)-enoyl-CoA</text>
        <dbReference type="Rhea" id="RHEA:45228"/>
        <dbReference type="ChEBI" id="CHEBI:58521"/>
        <dbReference type="ChEBI" id="CHEBI:85097"/>
        <dbReference type="EC" id="5.3.3.8"/>
    </reaction>
</comment>
<comment type="pathway">
    <text evidence="1">Lipid metabolism; fatty acid beta-oxidation.</text>
</comment>
<comment type="subunit">
    <text evidence="1">Heterotetramer of two alpha chains (FadB) and two beta chains (FadA).</text>
</comment>
<comment type="similarity">
    <text evidence="1">In the N-terminal section; belongs to the enoyl-CoA hydratase/isomerase family.</text>
</comment>
<comment type="similarity">
    <text evidence="1">In the C-terminal section; belongs to the 3-hydroxyacyl-CoA dehydrogenase family.</text>
</comment>
<gene>
    <name evidence="1" type="primary">fadB</name>
    <name type="ordered locus">plu4402</name>
</gene>
<protein>
    <recommendedName>
        <fullName evidence="1">Fatty acid oxidation complex subunit alpha</fullName>
    </recommendedName>
    <domain>
        <recommendedName>
            <fullName evidence="1">Enoyl-CoA hydratase/Delta(3)-cis-Delta(2)-trans-enoyl-CoA isomerase/3-hydroxybutyryl-CoA epimerase</fullName>
            <ecNumber evidence="1">4.2.1.17</ecNumber>
            <ecNumber evidence="1">5.1.2.3</ecNumber>
            <ecNumber evidence="1">5.3.3.8</ecNumber>
        </recommendedName>
    </domain>
    <domain>
        <recommendedName>
            <fullName evidence="1">3-hydroxyacyl-CoA dehydrogenase</fullName>
            <ecNumber evidence="1">1.1.1.35</ecNumber>
        </recommendedName>
    </domain>
</protein>
<accession>Q7MZ92</accession>
<proteinExistence type="inferred from homology"/>
<evidence type="ECO:0000255" key="1">
    <source>
        <dbReference type="HAMAP-Rule" id="MF_01621"/>
    </source>
</evidence>